<accession>A4QJM7</accession>
<keyword id="KW-0150">Chloroplast</keyword>
<keyword id="KW-0472">Membrane</keyword>
<keyword id="KW-0934">Plastid</keyword>
<keyword id="KW-0793">Thylakoid</keyword>
<keyword id="KW-0812">Transmembrane</keyword>
<keyword id="KW-1133">Transmembrane helix</keyword>
<reference key="1">
    <citation type="submission" date="2007-03" db="EMBL/GenBank/DDBJ databases">
        <title>Sequencing analysis of Aethionema grandiflorum chloroplast DNA.</title>
        <authorList>
            <person name="Hosouchi T."/>
            <person name="Tsuruoka H."/>
            <person name="Kotani H."/>
        </authorList>
    </citation>
    <scope>NUCLEOTIDE SEQUENCE [LARGE SCALE GENOMIC DNA]</scope>
</reference>
<protein>
    <recommendedName>
        <fullName evidence="1">Protein PsbN</fullName>
    </recommendedName>
</protein>
<name>PSBN_AETGR</name>
<organism>
    <name type="scientific">Aethionema grandiflorum</name>
    <name type="common">Persian stone-cress</name>
    <dbReference type="NCBI Taxonomy" id="72657"/>
    <lineage>
        <taxon>Eukaryota</taxon>
        <taxon>Viridiplantae</taxon>
        <taxon>Streptophyta</taxon>
        <taxon>Embryophyta</taxon>
        <taxon>Tracheophyta</taxon>
        <taxon>Spermatophyta</taxon>
        <taxon>Magnoliopsida</taxon>
        <taxon>eudicotyledons</taxon>
        <taxon>Gunneridae</taxon>
        <taxon>Pentapetalae</taxon>
        <taxon>rosids</taxon>
        <taxon>malvids</taxon>
        <taxon>Brassicales</taxon>
        <taxon>Brassicaceae</taxon>
        <taxon>Aethionemeae</taxon>
        <taxon>Aethionema</taxon>
    </lineage>
</organism>
<comment type="function">
    <text evidence="1">May play a role in photosystem I and II biogenesis.</text>
</comment>
<comment type="subcellular location">
    <subcellularLocation>
        <location evidence="1">Plastid</location>
        <location evidence="1">Chloroplast thylakoid membrane</location>
        <topology evidence="1">Single-pass membrane protein</topology>
    </subcellularLocation>
</comment>
<comment type="similarity">
    <text evidence="1">Belongs to the PsbN family.</text>
</comment>
<comment type="caution">
    <text evidence="1">Originally thought to be a component of PSII; based on experiments in Synechocystis, N.tabacum and barley, and its absence from PSII in T.elongatus and T.vulcanus, this is probably not true.</text>
</comment>
<sequence>METATLVAIFISGLLVSFTGYALYTAFGQPSQQLRDPFEEHGD</sequence>
<gene>
    <name evidence="1" type="primary">psbN</name>
</gene>
<evidence type="ECO:0000255" key="1">
    <source>
        <dbReference type="HAMAP-Rule" id="MF_00293"/>
    </source>
</evidence>
<feature type="chain" id="PRO_0000362173" description="Protein PsbN">
    <location>
        <begin position="1"/>
        <end position="43"/>
    </location>
</feature>
<feature type="transmembrane region" description="Helical" evidence="1">
    <location>
        <begin position="7"/>
        <end position="27"/>
    </location>
</feature>
<proteinExistence type="inferred from homology"/>
<dbReference type="EMBL" id="AP009367">
    <property type="protein sequence ID" value="BAF49882.1"/>
    <property type="molecule type" value="Genomic_DNA"/>
</dbReference>
<dbReference type="RefSeq" id="YP_001123058.1">
    <property type="nucleotide sequence ID" value="NC_009266.1"/>
</dbReference>
<dbReference type="SMR" id="A4QJM7"/>
<dbReference type="GeneID" id="4962289"/>
<dbReference type="GO" id="GO:0009535">
    <property type="term" value="C:chloroplast thylakoid membrane"/>
    <property type="evidence" value="ECO:0007669"/>
    <property type="project" value="UniProtKB-SubCell"/>
</dbReference>
<dbReference type="GO" id="GO:0015979">
    <property type="term" value="P:photosynthesis"/>
    <property type="evidence" value="ECO:0007669"/>
    <property type="project" value="InterPro"/>
</dbReference>
<dbReference type="HAMAP" id="MF_00293">
    <property type="entry name" value="PSII_PsbN"/>
    <property type="match status" value="1"/>
</dbReference>
<dbReference type="InterPro" id="IPR003398">
    <property type="entry name" value="PSII_PsbN"/>
</dbReference>
<dbReference type="PANTHER" id="PTHR35326">
    <property type="entry name" value="PROTEIN PSBN"/>
    <property type="match status" value="1"/>
</dbReference>
<dbReference type="PANTHER" id="PTHR35326:SF3">
    <property type="entry name" value="PROTEIN PSBN"/>
    <property type="match status" value="1"/>
</dbReference>
<dbReference type="Pfam" id="PF02468">
    <property type="entry name" value="PsbN"/>
    <property type="match status" value="1"/>
</dbReference>
<geneLocation type="chloroplast"/>